<accession>B0KRC1</accession>
<organism>
    <name type="scientific">Pseudomonas putida (strain GB-1)</name>
    <dbReference type="NCBI Taxonomy" id="76869"/>
    <lineage>
        <taxon>Bacteria</taxon>
        <taxon>Pseudomonadati</taxon>
        <taxon>Pseudomonadota</taxon>
        <taxon>Gammaproteobacteria</taxon>
        <taxon>Pseudomonadales</taxon>
        <taxon>Pseudomonadaceae</taxon>
        <taxon>Pseudomonas</taxon>
    </lineage>
</organism>
<name>YIDC_PSEPG</name>
<evidence type="ECO:0000255" key="1">
    <source>
        <dbReference type="HAMAP-Rule" id="MF_01810"/>
    </source>
</evidence>
<evidence type="ECO:0000256" key="2">
    <source>
        <dbReference type="SAM" id="MobiDB-lite"/>
    </source>
</evidence>
<dbReference type="EMBL" id="CP000926">
    <property type="protein sequence ID" value="ABZ01326.1"/>
    <property type="molecule type" value="Genomic_DNA"/>
</dbReference>
<dbReference type="RefSeq" id="WP_012274917.1">
    <property type="nucleotide sequence ID" value="NC_010322.1"/>
</dbReference>
<dbReference type="SMR" id="B0KRC1"/>
<dbReference type="KEGG" id="ppg:PputGB1_5444"/>
<dbReference type="eggNOG" id="COG0706">
    <property type="taxonomic scope" value="Bacteria"/>
</dbReference>
<dbReference type="HOGENOM" id="CLU_016535_3_0_6"/>
<dbReference type="Proteomes" id="UP000002157">
    <property type="component" value="Chromosome"/>
</dbReference>
<dbReference type="GO" id="GO:0005886">
    <property type="term" value="C:plasma membrane"/>
    <property type="evidence" value="ECO:0007669"/>
    <property type="project" value="UniProtKB-SubCell"/>
</dbReference>
<dbReference type="GO" id="GO:0032977">
    <property type="term" value="F:membrane insertase activity"/>
    <property type="evidence" value="ECO:0007669"/>
    <property type="project" value="InterPro"/>
</dbReference>
<dbReference type="GO" id="GO:0051205">
    <property type="term" value="P:protein insertion into membrane"/>
    <property type="evidence" value="ECO:0007669"/>
    <property type="project" value="TreeGrafter"/>
</dbReference>
<dbReference type="GO" id="GO:0015031">
    <property type="term" value="P:protein transport"/>
    <property type="evidence" value="ECO:0007669"/>
    <property type="project" value="UniProtKB-KW"/>
</dbReference>
<dbReference type="CDD" id="cd20070">
    <property type="entry name" value="5TM_YidC_Alb3"/>
    <property type="match status" value="1"/>
</dbReference>
<dbReference type="CDD" id="cd19961">
    <property type="entry name" value="EcYidC-like_peri"/>
    <property type="match status" value="1"/>
</dbReference>
<dbReference type="Gene3D" id="2.70.98.90">
    <property type="match status" value="1"/>
</dbReference>
<dbReference type="HAMAP" id="MF_01810">
    <property type="entry name" value="YidC_type1"/>
    <property type="match status" value="1"/>
</dbReference>
<dbReference type="InterPro" id="IPR019998">
    <property type="entry name" value="Membr_insert_YidC"/>
</dbReference>
<dbReference type="InterPro" id="IPR028053">
    <property type="entry name" value="Membr_insert_YidC_N"/>
</dbReference>
<dbReference type="InterPro" id="IPR001708">
    <property type="entry name" value="YidC/ALB3/OXA1/COX18"/>
</dbReference>
<dbReference type="InterPro" id="IPR028055">
    <property type="entry name" value="YidC/Oxa/ALB_C"/>
</dbReference>
<dbReference type="InterPro" id="IPR047196">
    <property type="entry name" value="YidC_ALB_C"/>
</dbReference>
<dbReference type="InterPro" id="IPR038221">
    <property type="entry name" value="YidC_periplasmic_sf"/>
</dbReference>
<dbReference type="NCBIfam" id="NF002352">
    <property type="entry name" value="PRK01318.1-3"/>
    <property type="match status" value="1"/>
</dbReference>
<dbReference type="NCBIfam" id="NF002353">
    <property type="entry name" value="PRK01318.1-4"/>
    <property type="match status" value="1"/>
</dbReference>
<dbReference type="NCBIfam" id="TIGR03593">
    <property type="entry name" value="yidC_nterm"/>
    <property type="match status" value="1"/>
</dbReference>
<dbReference type="NCBIfam" id="TIGR03592">
    <property type="entry name" value="yidC_oxa1_cterm"/>
    <property type="match status" value="1"/>
</dbReference>
<dbReference type="PANTHER" id="PTHR12428:SF65">
    <property type="entry name" value="CYTOCHROME C OXIDASE ASSEMBLY PROTEIN COX18, MITOCHONDRIAL"/>
    <property type="match status" value="1"/>
</dbReference>
<dbReference type="PANTHER" id="PTHR12428">
    <property type="entry name" value="OXA1"/>
    <property type="match status" value="1"/>
</dbReference>
<dbReference type="Pfam" id="PF02096">
    <property type="entry name" value="60KD_IMP"/>
    <property type="match status" value="1"/>
</dbReference>
<dbReference type="Pfam" id="PF14849">
    <property type="entry name" value="YidC_periplas"/>
    <property type="match status" value="1"/>
</dbReference>
<dbReference type="PRINTS" id="PR00701">
    <property type="entry name" value="60KDINNERMP"/>
</dbReference>
<dbReference type="PRINTS" id="PR01900">
    <property type="entry name" value="YIDCPROTEIN"/>
</dbReference>
<sequence length="560" mass="61869">MDIKRTILIAALAVVSYVMVLKWNDDYGQAALPTQNTAASTVAPGLPDGVPAGNNGASADVPSANAESSPAELAPVALSKDLIRVKTDVLELAIDPVGGDIVQLNLPKYPRRQDHPDIPFQLFDNGGERVYLAQSGLTGANGPDARASGRPLYAAEQKSYQLADGQEQLVVDLKFSDNGVNYIKRFSFKRGEYDLNVSYLIDNQSGQAWSGNMFAQLKRDASGDPSSSTATGTATYLGAALWTASEPYKKVSMKDIDKGGLKENVSGGWVAWLQHYFVTAWIPAKSDNNVVQTRKDSQGNYIIGYTGPVISVPAGGKVETSAMLYAGPKIQSKLKELSPGLELTVDYGFLWFIAQPIFWLLQHIHSLLGNWGWSIIVLTMLIKGLFFPLSAASYRSMARMRAVAPKLAALKERFGDDRQKMSQAMMELYKKEKINPLGGCLPILVQMPVFLALYWVLLESVEMRQAPWMLWITDLSIKDPFFILPIIMGATMFIQQRLNPTPPDPMQAKVMKMMPIIFTFFFLWFPAGLVLYWVVNNCLSISQQWYITRRIEAATKKAAA</sequence>
<keyword id="KW-0997">Cell inner membrane</keyword>
<keyword id="KW-1003">Cell membrane</keyword>
<keyword id="KW-0143">Chaperone</keyword>
<keyword id="KW-0472">Membrane</keyword>
<keyword id="KW-0653">Protein transport</keyword>
<keyword id="KW-0812">Transmembrane</keyword>
<keyword id="KW-1133">Transmembrane helix</keyword>
<keyword id="KW-0813">Transport</keyword>
<feature type="chain" id="PRO_1000088259" description="Membrane protein insertase YidC">
    <location>
        <begin position="1"/>
        <end position="560"/>
    </location>
</feature>
<feature type="transmembrane region" description="Helical" evidence="1">
    <location>
        <begin position="1"/>
        <end position="21"/>
    </location>
</feature>
<feature type="transmembrane region" description="Helical" evidence="1">
    <location>
        <begin position="341"/>
        <end position="361"/>
    </location>
</feature>
<feature type="transmembrane region" description="Helical" evidence="1">
    <location>
        <begin position="367"/>
        <end position="387"/>
    </location>
</feature>
<feature type="transmembrane region" description="Helical" evidence="1">
    <location>
        <begin position="437"/>
        <end position="457"/>
    </location>
</feature>
<feature type="transmembrane region" description="Helical" evidence="1">
    <location>
        <begin position="468"/>
        <end position="488"/>
    </location>
</feature>
<feature type="transmembrane region" description="Helical" evidence="1">
    <location>
        <begin position="515"/>
        <end position="535"/>
    </location>
</feature>
<feature type="region of interest" description="Disordered" evidence="2">
    <location>
        <begin position="42"/>
        <end position="66"/>
    </location>
</feature>
<proteinExistence type="inferred from homology"/>
<comment type="function">
    <text evidence="1">Required for the insertion and/or proper folding and/or complex formation of integral membrane proteins into the membrane. Involved in integration of membrane proteins that insert both dependently and independently of the Sec translocase complex, as well as at least some lipoproteins. Aids folding of multispanning membrane proteins.</text>
</comment>
<comment type="subunit">
    <text evidence="1">Interacts with the Sec translocase complex via SecD. Specifically interacts with transmembrane segments of nascent integral membrane proteins during membrane integration.</text>
</comment>
<comment type="subcellular location">
    <subcellularLocation>
        <location evidence="1">Cell inner membrane</location>
        <topology evidence="1">Multi-pass membrane protein</topology>
    </subcellularLocation>
</comment>
<comment type="similarity">
    <text evidence="1">Belongs to the OXA1/ALB3/YidC family. Type 1 subfamily.</text>
</comment>
<protein>
    <recommendedName>
        <fullName evidence="1">Membrane protein insertase YidC</fullName>
    </recommendedName>
    <alternativeName>
        <fullName evidence="1">Foldase YidC</fullName>
    </alternativeName>
    <alternativeName>
        <fullName evidence="1">Membrane integrase YidC</fullName>
    </alternativeName>
    <alternativeName>
        <fullName evidence="1">Membrane protein YidC</fullName>
    </alternativeName>
</protein>
<gene>
    <name evidence="1" type="primary">yidC</name>
    <name type="ordered locus">PputGB1_5444</name>
</gene>
<reference key="1">
    <citation type="submission" date="2008-01" db="EMBL/GenBank/DDBJ databases">
        <title>Complete sequence of Pseudomonas putida GB-1.</title>
        <authorList>
            <consortium name="US DOE Joint Genome Institute"/>
            <person name="Copeland A."/>
            <person name="Lucas S."/>
            <person name="Lapidus A."/>
            <person name="Barry K."/>
            <person name="Glavina del Rio T."/>
            <person name="Dalin E."/>
            <person name="Tice H."/>
            <person name="Pitluck S."/>
            <person name="Bruce D."/>
            <person name="Goodwin L."/>
            <person name="Chertkov O."/>
            <person name="Brettin T."/>
            <person name="Detter J.C."/>
            <person name="Han C."/>
            <person name="Kuske C.R."/>
            <person name="Schmutz J."/>
            <person name="Larimer F."/>
            <person name="Land M."/>
            <person name="Hauser L."/>
            <person name="Kyrpides N."/>
            <person name="Kim E."/>
            <person name="McCarthy J.K."/>
            <person name="Richardson P."/>
        </authorList>
    </citation>
    <scope>NUCLEOTIDE SEQUENCE [LARGE SCALE GENOMIC DNA]</scope>
    <source>
        <strain>GB-1</strain>
    </source>
</reference>